<proteinExistence type="evidence at protein level"/>
<evidence type="ECO:0000250" key="1">
    <source>
        <dbReference type="UniProtKB" id="P0C0X8"/>
    </source>
</evidence>
<evidence type="ECO:0000255" key="2"/>
<evidence type="ECO:0000255" key="3">
    <source>
        <dbReference type="PROSITE-ProRule" id="PRU00433"/>
    </source>
</evidence>
<evidence type="ECO:0000269" key="4">
    <source>
    </source>
</evidence>
<evidence type="ECO:0000305" key="5"/>
<accession>P86317</accession>
<name>CYC23_RHOPL</name>
<keyword id="KW-0903">Direct protein sequencing</keyword>
<keyword id="KW-0249">Electron transport</keyword>
<keyword id="KW-0349">Heme</keyword>
<keyword id="KW-0408">Iron</keyword>
<keyword id="KW-0479">Metal-binding</keyword>
<keyword id="KW-0574">Periplasm</keyword>
<keyword id="KW-0602">Photosynthesis</keyword>
<keyword id="KW-0873">Pyrrolidone carboxylic acid</keyword>
<keyword id="KW-0813">Transport</keyword>
<sequence length="114" mass="12278">QDAAKGEAVFKQCMTCHRADKNMVGPALAGVVGRKAGTAPGFSYSPLNHHSGEAGLVWTQENIITYLADPNAFLKKFLTDKGHADQAVGATKMTFKLANEQQRKDVVAYLATLK</sequence>
<dbReference type="SMR" id="P86317"/>
<dbReference type="GO" id="GO:0042597">
    <property type="term" value="C:periplasmic space"/>
    <property type="evidence" value="ECO:0000314"/>
    <property type="project" value="UniProtKB"/>
</dbReference>
<dbReference type="GO" id="GO:0009055">
    <property type="term" value="F:electron transfer activity"/>
    <property type="evidence" value="ECO:0007669"/>
    <property type="project" value="InterPro"/>
</dbReference>
<dbReference type="GO" id="GO:0020037">
    <property type="term" value="F:heme binding"/>
    <property type="evidence" value="ECO:0007669"/>
    <property type="project" value="InterPro"/>
</dbReference>
<dbReference type="GO" id="GO:0046872">
    <property type="term" value="F:metal ion binding"/>
    <property type="evidence" value="ECO:0007669"/>
    <property type="project" value="UniProtKB-KW"/>
</dbReference>
<dbReference type="GO" id="GO:0015979">
    <property type="term" value="P:photosynthesis"/>
    <property type="evidence" value="ECO:0007669"/>
    <property type="project" value="UniProtKB-KW"/>
</dbReference>
<dbReference type="Gene3D" id="1.10.760.10">
    <property type="entry name" value="Cytochrome c-like domain"/>
    <property type="match status" value="1"/>
</dbReference>
<dbReference type="InterPro" id="IPR009056">
    <property type="entry name" value="Cyt_c-like_dom"/>
</dbReference>
<dbReference type="InterPro" id="IPR036909">
    <property type="entry name" value="Cyt_c-like_dom_sf"/>
</dbReference>
<dbReference type="InterPro" id="IPR002327">
    <property type="entry name" value="Cyt_c_1A/1B"/>
</dbReference>
<dbReference type="PANTHER" id="PTHR11961">
    <property type="entry name" value="CYTOCHROME C"/>
    <property type="match status" value="1"/>
</dbReference>
<dbReference type="Pfam" id="PF00034">
    <property type="entry name" value="Cytochrom_C"/>
    <property type="match status" value="1"/>
</dbReference>
<dbReference type="PRINTS" id="PR00604">
    <property type="entry name" value="CYTCHRMECIAB"/>
</dbReference>
<dbReference type="SUPFAM" id="SSF46626">
    <property type="entry name" value="Cytochrome c"/>
    <property type="match status" value="1"/>
</dbReference>
<dbReference type="PROSITE" id="PS51007">
    <property type="entry name" value="CYTC"/>
    <property type="match status" value="1"/>
</dbReference>
<comment type="function">
    <text evidence="5">Cytochrome c2 is found mainly in purple, non-sulfur, photosynthetic bacteria where it functions as the electron donor to the oxidized bacteriochlorophyll in the photophosphorylation pathway. However, it may also have a role in the respiratory chain and is found in some non-photosynthetic bacteria.</text>
</comment>
<comment type="subcellular location">
    <subcellularLocation>
        <location evidence="4">Periplasm</location>
    </subcellularLocation>
</comment>
<comment type="PTM">
    <text evidence="1">Binds 1 heme c group covalently per subunit.</text>
</comment>
<comment type="similarity">
    <text evidence="2">Belongs to the cytochrome c family.</text>
</comment>
<organism>
    <name type="scientific">Rhodopseudomonas palustris</name>
    <dbReference type="NCBI Taxonomy" id="1076"/>
    <lineage>
        <taxon>Bacteria</taxon>
        <taxon>Pseudomonadati</taxon>
        <taxon>Pseudomonadota</taxon>
        <taxon>Alphaproteobacteria</taxon>
        <taxon>Hyphomicrobiales</taxon>
        <taxon>Nitrobacteraceae</taxon>
        <taxon>Rhodopseudomonas</taxon>
    </lineage>
</organism>
<reference key="1">
    <citation type="journal article" date="2010" name="Arch. Microbiol.">
        <title>Evidence from the structure and function of cytochromes c(2) that nonsulfur purple bacterial photosynthesis followed the evolution of oxygen respiration.</title>
        <authorList>
            <person name="Meyer T."/>
            <person name="Van Driessche G."/>
            <person name="Ambler R."/>
            <person name="Kyndt J."/>
            <person name="Devreese B."/>
            <person name="Van Beeumen J."/>
            <person name="Cusanovich M."/>
        </authorList>
    </citation>
    <scope>PROTEIN SEQUENCE</scope>
    <scope>SUBCELLULAR LOCATION</scope>
</reference>
<feature type="chain" id="PRO_0000379963" description="Cytochrome c2">
    <location>
        <begin position="1"/>
        <end position="114"/>
    </location>
</feature>
<feature type="binding site" description="covalent" evidence="1 3">
    <location>
        <position position="13"/>
    </location>
    <ligand>
        <name>heme c</name>
        <dbReference type="ChEBI" id="CHEBI:61717"/>
    </ligand>
</feature>
<feature type="binding site" description="covalent" evidence="1 3">
    <location>
        <position position="16"/>
    </location>
    <ligand>
        <name>heme c</name>
        <dbReference type="ChEBI" id="CHEBI:61717"/>
    </ligand>
</feature>
<feature type="binding site" description="axial binding residue" evidence="1 3">
    <location>
        <position position="17"/>
    </location>
    <ligand>
        <name>heme c</name>
        <dbReference type="ChEBI" id="CHEBI:61717"/>
    </ligand>
    <ligandPart>
        <name>Fe</name>
        <dbReference type="ChEBI" id="CHEBI:18248"/>
    </ligandPart>
</feature>
<feature type="binding site" description="axial binding residue" evidence="1 3">
    <location>
        <position position="93"/>
    </location>
    <ligand>
        <name>heme c</name>
        <dbReference type="ChEBI" id="CHEBI:61717"/>
    </ligand>
    <ligandPart>
        <name>Fe</name>
        <dbReference type="ChEBI" id="CHEBI:18248"/>
    </ligandPart>
</feature>
<feature type="modified residue" description="Pyrrolidone carboxylic acid" evidence="1">
    <location>
        <position position="1"/>
    </location>
</feature>
<protein>
    <recommendedName>
        <fullName evidence="1">Cytochrome c2</fullName>
    </recommendedName>
</protein>